<dbReference type="EMBL" id="GU292857">
    <property type="protein sequence ID" value="ADB56673.1"/>
    <property type="molecule type" value="mRNA"/>
</dbReference>
<dbReference type="SMR" id="D2Y1Y0"/>
<dbReference type="ArachnoServer" id="AS000339">
    <property type="toxin name" value="mu-theraphotoxin-Hhn2a"/>
</dbReference>
<dbReference type="GO" id="GO:0005576">
    <property type="term" value="C:extracellular region"/>
    <property type="evidence" value="ECO:0007669"/>
    <property type="project" value="UniProtKB-SubCell"/>
</dbReference>
<dbReference type="GO" id="GO:0044231">
    <property type="term" value="C:host cell presynaptic membrane"/>
    <property type="evidence" value="ECO:0007669"/>
    <property type="project" value="UniProtKB-KW"/>
</dbReference>
<dbReference type="GO" id="GO:0008200">
    <property type="term" value="F:ion channel inhibitor activity"/>
    <property type="evidence" value="ECO:0007669"/>
    <property type="project" value="InterPro"/>
</dbReference>
<dbReference type="GO" id="GO:0017080">
    <property type="term" value="F:sodium channel regulator activity"/>
    <property type="evidence" value="ECO:0007669"/>
    <property type="project" value="UniProtKB-KW"/>
</dbReference>
<dbReference type="GO" id="GO:0090729">
    <property type="term" value="F:toxin activity"/>
    <property type="evidence" value="ECO:0007669"/>
    <property type="project" value="UniProtKB-KW"/>
</dbReference>
<dbReference type="InterPro" id="IPR011696">
    <property type="entry name" value="Huwentoxin-1"/>
</dbReference>
<dbReference type="InterPro" id="IPR013140">
    <property type="entry name" value="Huwentoxin_CS1"/>
</dbReference>
<dbReference type="Pfam" id="PF07740">
    <property type="entry name" value="Toxin_12"/>
    <property type="match status" value="1"/>
</dbReference>
<dbReference type="SUPFAM" id="SSF57059">
    <property type="entry name" value="omega toxin-like"/>
    <property type="match status" value="1"/>
</dbReference>
<dbReference type="PROSITE" id="PS60021">
    <property type="entry name" value="HWTX_1"/>
    <property type="match status" value="1"/>
</dbReference>
<evidence type="ECO:0000255" key="1"/>
<evidence type="ECO:0000269" key="2">
    <source>
    </source>
</evidence>
<evidence type="ECO:0000269" key="3">
    <source>
    </source>
</evidence>
<evidence type="ECO:0000269" key="4">
    <source>
    </source>
</evidence>
<evidence type="ECO:0000269" key="5">
    <source ref="3"/>
</evidence>
<evidence type="ECO:0000269" key="6">
    <source ref="5"/>
</evidence>
<evidence type="ECO:0000303" key="7">
    <source>
    </source>
</evidence>
<evidence type="ECO:0000303" key="8">
    <source ref="5"/>
</evidence>
<evidence type="ECO:0000305" key="9"/>
<evidence type="ECO:0000305" key="10">
    <source>
    </source>
</evidence>
<evidence type="ECO:0000305" key="11">
    <source>
    </source>
</evidence>
<keyword id="KW-0027">Amidation</keyword>
<keyword id="KW-0903">Direct protein sequencing</keyword>
<keyword id="KW-1015">Disulfide bond</keyword>
<keyword id="KW-0872">Ion channel impairing toxin</keyword>
<keyword id="KW-0960">Knottin</keyword>
<keyword id="KW-0528">Neurotoxin</keyword>
<keyword id="KW-0638">Presynaptic neurotoxin</keyword>
<keyword id="KW-0964">Secreted</keyword>
<keyword id="KW-0732">Signal</keyword>
<keyword id="KW-0800">Toxin</keyword>
<keyword id="KW-0738">Voltage-gated sodium channel impairing toxin</keyword>
<accession>D2Y1Y0</accession>
<accession>P83464</accession>
<organism>
    <name type="scientific">Cyriopagopus hainanus</name>
    <name type="common">Chinese bird spider</name>
    <name type="synonym">Haplopelma hainanum</name>
    <dbReference type="NCBI Taxonomy" id="209901"/>
    <lineage>
        <taxon>Eukaryota</taxon>
        <taxon>Metazoa</taxon>
        <taxon>Ecdysozoa</taxon>
        <taxon>Arthropoda</taxon>
        <taxon>Chelicerata</taxon>
        <taxon>Arachnida</taxon>
        <taxon>Araneae</taxon>
        <taxon>Mygalomorphae</taxon>
        <taxon>Theraphosidae</taxon>
        <taxon>Haplopelma</taxon>
    </lineage>
</organism>
<name>H3A02_CYRHA</name>
<sequence length="83" mass="9211">MKASMYLALAGLVLLFVVGYASESEEKEFPRELLSKIFAVDDFKGEERGCKGFGDSCTPGKNECCPNYACSSKHKWCKVYLGK</sequence>
<reference key="1">
    <citation type="journal article" date="2010" name="J. Proteome Res.">
        <title>Molecular diversification of peptide toxins from the tarantula Haplopelma hainanum (Ornithoctonus hainana) venom based on transcriptomic, peptidomic, and genomic analyses.</title>
        <authorList>
            <person name="Tang X."/>
            <person name="Zhang Y."/>
            <person name="Hu W."/>
            <person name="Xu D."/>
            <person name="Tao H."/>
            <person name="Yang X."/>
            <person name="Li Y."/>
            <person name="Jiang L."/>
            <person name="Liang S."/>
        </authorList>
    </citation>
    <scope>NUCLEOTIDE SEQUENCE [LARGE SCALE MRNA]</scope>
    <scope>PROTEIN SEQUENCE OF 49-81</scope>
    <scope>IDENTIFICATION BY MASS SPECTROMETRY</scope>
    <source>
        <tissue>Venom</tissue>
        <tissue>Venom gland</tissue>
    </source>
</reference>
<reference key="2">
    <citation type="journal article" date="2003" name="Eur. J. Pharmacol.">
        <title>Inhibition of neuronal tetrodotoxin-sensitive Na+ channels by two spider toxins: hainantoxin-III and hainantoxin-IV.</title>
        <authorList>
            <person name="Xiao Y."/>
            <person name="Liang S."/>
        </authorList>
    </citation>
    <scope>PROTEIN SEQUENCE OF 49-81</scope>
    <scope>FUNCTION</scope>
    <scope>SUBCELLULAR LOCATION</scope>
    <scope>AMIDATION AT LEU-81</scope>
    <source>
        <tissue>Venom</tissue>
    </source>
</reference>
<reference key="3">
    <citation type="submission" date="2002-10" db="UniProtKB">
        <title>Function and solution structure of hainantoxin-III, a potent neuronal TTX-sensitive sodium channel antagonist from Chinese bird spider Selenocosmia hainana.</title>
        <authorList>
            <person name="Zhu Q."/>
            <person name="Liu Z.-H."/>
            <person name="Liang S.-P."/>
        </authorList>
    </citation>
    <scope>SUBUNIT</scope>
    <scope>MASS SPECTROMETRY</scope>
</reference>
<reference key="4">
    <citation type="journal article" date="2013" name="J. Biol. Chem.">
        <title>Structure and function of hainantoxin-III, a selective antagonist of neuronal tetrodotoxin-sensitive voltage-gated sodium channels isolated from the Chinese bird spider Ornithoctonus hainana.</title>
        <authorList>
            <person name="Liu Z."/>
            <person name="Cai T."/>
            <person name="Zhu Q."/>
            <person name="Deng M."/>
            <person name="Li J."/>
            <person name="Zhou X."/>
            <person name="Zhang F."/>
            <person name="Li D."/>
            <person name="Li J."/>
            <person name="Liu Y."/>
            <person name="Hu W."/>
            <person name="Liang S."/>
        </authorList>
    </citation>
    <scope>FUNCTION</scope>
    <scope>SUBCELLULAR LOCATION</scope>
    <scope>STRUCTURE BY NMR OF 49-81</scope>
    <scope>DISULFIDE BONDS</scope>
    <source>
        <tissue>Venom</tissue>
    </source>
</reference>
<reference key="5">
    <citation type="submission" date="2007-07" db="PDB data bank">
        <title>Three dimensional solution structure of hainantoxin-III by 2D 1H-NMR.</title>
        <authorList>
            <person name="Zhu Q."/>
            <person name="Liu Z."/>
            <person name="Liang S."/>
        </authorList>
    </citation>
    <scope>STRUCTURE BY NMR OF 49-81</scope>
    <scope>DISULFIDE BONDS</scope>
</reference>
<comment type="function">
    <text evidence="4">Selective antagonist of neuronal tetrodotoxin (TTX)-sensitive voltage-gated sodium channels (IC(50)=1270 nM on Nav1.1/SCN1A, 270 nM on Nav1.2/SCN2A, 491 nM on Nav1.3/SCN3A and 232 nM on Nav1.7/SCN9A). This toxin suppress Nav1.7 current amplitude without significantly altering the activation, inactivation, and repriming kinetics. Short extreme depolarizations partially activate the toxin-bound channel, indicating voltage-dependent inhibition of this toxin. This toxin increases the deactivation of the Nav1.7 current after extreme depolarizations. The toxin-Nav1.7 complex is gradually dissociated upon prolonged strong depolarizations in a voltage-dependent manner, and the unbound toxin rebinds to Nav1.7 after a long repolarization. Moreover, analysis of chimeric channels showed that the DIIS3-S4 linker is critical for toxin binding to Nav1.7. These data are consistent with this toxin interacting with Nav1.7 site 4 and trapping the domain II voltage sensor in the closed state.</text>
</comment>
<comment type="subunit">
    <text evidence="5">Monomer.</text>
</comment>
<comment type="subcellular location">
    <subcellularLocation>
        <location evidence="2 4">Secreted</location>
    </subcellularLocation>
</comment>
<comment type="tissue specificity">
    <text evidence="10 11">Expressed by the venom gland.</text>
</comment>
<comment type="domain">
    <text evidence="4">The presence of a 'disulfide through disulfide knot' structurally defines this protein as a knottin.</text>
</comment>
<comment type="mass spectrometry" mass="3607.6" method="Electrospray" evidence="5"/>
<comment type="miscellaneous">
    <text evidence="2 4">Negative results: has no activity on Nav1.4, Nav1.5, Nav1.8 and Nav1.9 sodium and calcium currents.</text>
</comment>
<comment type="similarity">
    <text evidence="9">Belongs to the neurotoxin 10 (Hwtx-1) family. 15 (Hntx-3) subfamily.</text>
</comment>
<comment type="caution">
    <text evidence="9">Several genes are coding for this toxin for which the structure by NMR has been determined. The cross-references to PDB and additional information can be found in entry AC D2Y1X9.</text>
</comment>
<protein>
    <recommendedName>
        <fullName evidence="7 8">Hainantoxin-III 2</fullName>
        <shortName evidence="7 8">HnTx-III</shortName>
    </recommendedName>
    <alternativeName>
        <fullName>Hainantoxin-3.2</fullName>
    </alternativeName>
    <alternativeName>
        <fullName>Mu-theraphotoxin-Hhn2a</fullName>
        <shortName>Mu-TRTX-Hhn2a</shortName>
    </alternativeName>
    <alternativeName>
        <fullName>Peptide F7-18.76</fullName>
    </alternativeName>
</protein>
<proteinExistence type="evidence at protein level"/>
<feature type="signal peptide" evidence="1">
    <location>
        <begin position="1"/>
        <end position="21"/>
    </location>
</feature>
<feature type="propeptide" id="PRO_0000400506" evidence="2 3">
    <location>
        <begin position="22"/>
        <end position="48"/>
    </location>
</feature>
<feature type="peptide" id="PRO_0000400507" description="Hainantoxin-III 2" evidence="2 3">
    <location>
        <begin position="49"/>
        <end position="81"/>
    </location>
</feature>
<feature type="modified residue" description="Leucine amide" evidence="2">
    <location>
        <position position="81"/>
    </location>
</feature>
<feature type="disulfide bond" evidence="4 6">
    <location>
        <begin position="50"/>
        <end position="65"/>
    </location>
</feature>
<feature type="disulfide bond" evidence="4 6">
    <location>
        <begin position="57"/>
        <end position="70"/>
    </location>
</feature>
<feature type="disulfide bond" evidence="4 6">
    <location>
        <begin position="64"/>
        <end position="77"/>
    </location>
</feature>